<name>PCRB_BACC2</name>
<dbReference type="EC" id="2.5.1.n9" evidence="1"/>
<dbReference type="EMBL" id="CP001186">
    <property type="protein sequence ID" value="ACK94169.1"/>
    <property type="molecule type" value="Genomic_DNA"/>
</dbReference>
<dbReference type="RefSeq" id="WP_000272085.1">
    <property type="nucleotide sequence ID" value="NC_011772.1"/>
</dbReference>
<dbReference type="SMR" id="B7IUW3"/>
<dbReference type="KEGG" id="bcg:BCG9842_B4970"/>
<dbReference type="HOGENOM" id="CLU_095211_0_0_9"/>
<dbReference type="UniPathway" id="UPA00940"/>
<dbReference type="Proteomes" id="UP000006744">
    <property type="component" value="Chromosome"/>
</dbReference>
<dbReference type="GO" id="GO:0120536">
    <property type="term" value="F:heptaprenylglyceryl phosphate synthase activity"/>
    <property type="evidence" value="ECO:0007669"/>
    <property type="project" value="RHEA"/>
</dbReference>
<dbReference type="GO" id="GO:0000287">
    <property type="term" value="F:magnesium ion binding"/>
    <property type="evidence" value="ECO:0007669"/>
    <property type="project" value="UniProtKB-UniRule"/>
</dbReference>
<dbReference type="GO" id="GO:0046474">
    <property type="term" value="P:glycerophospholipid biosynthetic process"/>
    <property type="evidence" value="ECO:0007669"/>
    <property type="project" value="UniProtKB-UniRule"/>
</dbReference>
<dbReference type="CDD" id="cd02812">
    <property type="entry name" value="PcrB_like"/>
    <property type="match status" value="1"/>
</dbReference>
<dbReference type="FunFam" id="3.20.20.390:FF:000001">
    <property type="entry name" value="Heptaprenylglyceryl phosphate synthase"/>
    <property type="match status" value="1"/>
</dbReference>
<dbReference type="Gene3D" id="3.20.20.390">
    <property type="entry name" value="FMN-linked oxidoreductases"/>
    <property type="match status" value="1"/>
</dbReference>
<dbReference type="HAMAP" id="MF_00112">
    <property type="entry name" value="GGGP_HepGP_synthase"/>
    <property type="match status" value="1"/>
</dbReference>
<dbReference type="InterPro" id="IPR039074">
    <property type="entry name" value="GGGP/HepGP_synthase_I"/>
</dbReference>
<dbReference type="InterPro" id="IPR038597">
    <property type="entry name" value="GGGP/HepGP_synthase_sf"/>
</dbReference>
<dbReference type="InterPro" id="IPR008205">
    <property type="entry name" value="GGGP_HepGP_synthase"/>
</dbReference>
<dbReference type="NCBIfam" id="TIGR01768">
    <property type="entry name" value="GGGP-family"/>
    <property type="match status" value="1"/>
</dbReference>
<dbReference type="NCBIfam" id="NF003197">
    <property type="entry name" value="PRK04169.1-1"/>
    <property type="match status" value="1"/>
</dbReference>
<dbReference type="NCBIfam" id="NF003199">
    <property type="entry name" value="PRK04169.1-3"/>
    <property type="match status" value="1"/>
</dbReference>
<dbReference type="PANTHER" id="PTHR40029">
    <property type="match status" value="1"/>
</dbReference>
<dbReference type="PANTHER" id="PTHR40029:SF2">
    <property type="entry name" value="HEPTAPRENYLGLYCERYL PHOSPHATE SYNTHASE"/>
    <property type="match status" value="1"/>
</dbReference>
<dbReference type="Pfam" id="PF01884">
    <property type="entry name" value="PcrB"/>
    <property type="match status" value="1"/>
</dbReference>
<dbReference type="SUPFAM" id="SSF51395">
    <property type="entry name" value="FMN-linked oxidoreductases"/>
    <property type="match status" value="1"/>
</dbReference>
<gene>
    <name evidence="1" type="primary">pcrB</name>
    <name type="ordered locus">BCG9842_B4970</name>
</gene>
<proteinExistence type="inferred from homology"/>
<accession>B7IUW3</accession>
<evidence type="ECO:0000255" key="1">
    <source>
        <dbReference type="HAMAP-Rule" id="MF_00112"/>
    </source>
</evidence>
<feature type="chain" id="PRO_1000117516" description="Heptaprenylglyceryl phosphate synthase">
    <location>
        <begin position="1"/>
        <end position="229"/>
    </location>
</feature>
<feature type="binding site" evidence="1">
    <location>
        <position position="12"/>
    </location>
    <ligand>
        <name>sn-glycerol 1-phosphate</name>
        <dbReference type="ChEBI" id="CHEBI:57685"/>
    </ligand>
</feature>
<feature type="binding site" evidence="1">
    <location>
        <position position="14"/>
    </location>
    <ligand>
        <name>Mg(2+)</name>
        <dbReference type="ChEBI" id="CHEBI:18420"/>
    </ligand>
</feature>
<feature type="binding site" evidence="1">
    <location>
        <position position="40"/>
    </location>
    <ligand>
        <name>Mg(2+)</name>
        <dbReference type="ChEBI" id="CHEBI:18420"/>
    </ligand>
</feature>
<feature type="binding site" evidence="1">
    <location>
        <begin position="159"/>
        <end position="164"/>
    </location>
    <ligand>
        <name>sn-glycerol 1-phosphate</name>
        <dbReference type="ChEBI" id="CHEBI:57685"/>
    </ligand>
</feature>
<feature type="binding site" evidence="1">
    <location>
        <position position="189"/>
    </location>
    <ligand>
        <name>sn-glycerol 1-phosphate</name>
        <dbReference type="ChEBI" id="CHEBI:57685"/>
    </ligand>
</feature>
<feature type="binding site" evidence="1">
    <location>
        <begin position="209"/>
        <end position="210"/>
    </location>
    <ligand>
        <name>sn-glycerol 1-phosphate</name>
        <dbReference type="ChEBI" id="CHEBI:57685"/>
    </ligand>
</feature>
<reference key="1">
    <citation type="submission" date="2008-10" db="EMBL/GenBank/DDBJ databases">
        <title>Genome sequence of Bacillus cereus G9842.</title>
        <authorList>
            <person name="Dodson R.J."/>
            <person name="Durkin A.S."/>
            <person name="Rosovitz M.J."/>
            <person name="Rasko D.A."/>
            <person name="Hoffmaster A."/>
            <person name="Ravel J."/>
            <person name="Sutton G."/>
        </authorList>
    </citation>
    <scope>NUCLEOTIDE SEQUENCE [LARGE SCALE GENOMIC DNA]</scope>
    <source>
        <strain>G9842</strain>
    </source>
</reference>
<keyword id="KW-0444">Lipid biosynthesis</keyword>
<keyword id="KW-0443">Lipid metabolism</keyword>
<keyword id="KW-0460">Magnesium</keyword>
<keyword id="KW-0479">Metal-binding</keyword>
<keyword id="KW-0594">Phospholipid biosynthesis</keyword>
<keyword id="KW-1208">Phospholipid metabolism</keyword>
<keyword id="KW-0808">Transferase</keyword>
<organism>
    <name type="scientific">Bacillus cereus (strain G9842)</name>
    <dbReference type="NCBI Taxonomy" id="405531"/>
    <lineage>
        <taxon>Bacteria</taxon>
        <taxon>Bacillati</taxon>
        <taxon>Bacillota</taxon>
        <taxon>Bacilli</taxon>
        <taxon>Bacillales</taxon>
        <taxon>Bacillaceae</taxon>
        <taxon>Bacillus</taxon>
        <taxon>Bacillus cereus group</taxon>
    </lineage>
</organism>
<comment type="function">
    <text evidence="1">Prenyltransferase that catalyzes in vivo the transfer of the heptaprenyl moiety of heptaprenyl pyrophosphate (HepPP; 35 carbon atoms) to the C3 hydroxyl of sn-glycerol-1-phosphate (G1P), producing heptaprenylglyceryl phosphate (HepGP). This reaction is an ether-bond-formation step in the biosynthesis of archaea-type G1P-based membrane lipids found in Bacillales.</text>
</comment>
<comment type="catalytic activity">
    <reaction evidence="1">
        <text>sn-glycerol 1-phosphate + all-trans-heptaprenyl diphosphate = 3-heptaprenyl-sn-glycero-1-phosphate + diphosphate</text>
        <dbReference type="Rhea" id="RHEA:33495"/>
        <dbReference type="ChEBI" id="CHEBI:33019"/>
        <dbReference type="ChEBI" id="CHEBI:57685"/>
        <dbReference type="ChEBI" id="CHEBI:58206"/>
        <dbReference type="ChEBI" id="CHEBI:64781"/>
        <dbReference type="EC" id="2.5.1.n9"/>
    </reaction>
</comment>
<comment type="cofactor">
    <cofactor evidence="1">
        <name>Mg(2+)</name>
        <dbReference type="ChEBI" id="CHEBI:18420"/>
    </cofactor>
</comment>
<comment type="pathway">
    <text evidence="1">Membrane lipid metabolism; glycerophospholipid metabolism.</text>
</comment>
<comment type="subunit">
    <text evidence="1">Homodimer.</text>
</comment>
<comment type="similarity">
    <text evidence="1">Belongs to the GGGP/HepGP synthase family. Group I subfamily.</text>
</comment>
<protein>
    <recommendedName>
        <fullName evidence="1">Heptaprenylglyceryl phosphate synthase</fullName>
        <shortName evidence="1">HepGP synthase</shortName>
        <ecNumber evidence="1">2.5.1.n9</ecNumber>
    </recommendedName>
    <alternativeName>
        <fullName evidence="1">Glycerol-1-phosphate heptaprenyltransferase</fullName>
    </alternativeName>
</protein>
<sequence length="229" mass="25569">MYDISGWKHVFKLDPNKELSDEHLEMICESGTDAVIVGGSDGVTIDNVLHMLVSIRRYAVPCVLEVSDVEAITPGFDFYYIPSVLNSRKVEWVTGVHHEALKEFGDIMDWDEIFMEGYCVLNPEAKVAQLTDAKCDLTEDDVIAYARLADKLLHLPIFYLEYSGTYGEVELVKNVKAELKQAQLYYGGGISNAEQAKEMAQYADTVVVGNIIYDDIKSALKTVKAVKGE</sequence>